<protein>
    <recommendedName>
        <fullName evidence="1">Probable Fe(2+)-trafficking protein</fullName>
    </recommendedName>
</protein>
<reference key="1">
    <citation type="submission" date="2008-01" db="EMBL/GenBank/DDBJ databases">
        <title>Complete sequence of Shewanella halifaxensis HAW-EB4.</title>
        <authorList>
            <consortium name="US DOE Joint Genome Institute"/>
            <person name="Copeland A."/>
            <person name="Lucas S."/>
            <person name="Lapidus A."/>
            <person name="Glavina del Rio T."/>
            <person name="Dalin E."/>
            <person name="Tice H."/>
            <person name="Bruce D."/>
            <person name="Goodwin L."/>
            <person name="Pitluck S."/>
            <person name="Sims D."/>
            <person name="Brettin T."/>
            <person name="Detter J.C."/>
            <person name="Han C."/>
            <person name="Kuske C.R."/>
            <person name="Schmutz J."/>
            <person name="Larimer F."/>
            <person name="Land M."/>
            <person name="Hauser L."/>
            <person name="Kyrpides N."/>
            <person name="Kim E."/>
            <person name="Zhao J.-S."/>
            <person name="Richardson P."/>
        </authorList>
    </citation>
    <scope>NUCLEOTIDE SEQUENCE [LARGE SCALE GENOMIC DNA]</scope>
    <source>
        <strain>HAW-EB4</strain>
    </source>
</reference>
<evidence type="ECO:0000255" key="1">
    <source>
        <dbReference type="HAMAP-Rule" id="MF_00686"/>
    </source>
</evidence>
<sequence>MARTVNCVYLNKEAEGLGFQLYPGDLGKRIFDNVSKEAWALWQSKQTMLINEKKLNMMNVDDRKFLEEQMVNFLFEGKDVEIEGYVPQKDDE</sequence>
<accession>B0TJD1</accession>
<dbReference type="EMBL" id="CP000931">
    <property type="protein sequence ID" value="ABZ75722.1"/>
    <property type="molecule type" value="Genomic_DNA"/>
</dbReference>
<dbReference type="RefSeq" id="WP_012276265.1">
    <property type="nucleotide sequence ID" value="NC_010334.1"/>
</dbReference>
<dbReference type="SMR" id="B0TJD1"/>
<dbReference type="STRING" id="458817.Shal_1153"/>
<dbReference type="KEGG" id="shl:Shal_1153"/>
<dbReference type="eggNOG" id="COG2924">
    <property type="taxonomic scope" value="Bacteria"/>
</dbReference>
<dbReference type="HOGENOM" id="CLU_170994_0_0_6"/>
<dbReference type="OrthoDB" id="9804318at2"/>
<dbReference type="Proteomes" id="UP000001317">
    <property type="component" value="Chromosome"/>
</dbReference>
<dbReference type="GO" id="GO:0005829">
    <property type="term" value="C:cytosol"/>
    <property type="evidence" value="ECO:0007669"/>
    <property type="project" value="TreeGrafter"/>
</dbReference>
<dbReference type="GO" id="GO:0005506">
    <property type="term" value="F:iron ion binding"/>
    <property type="evidence" value="ECO:0007669"/>
    <property type="project" value="UniProtKB-UniRule"/>
</dbReference>
<dbReference type="GO" id="GO:0034599">
    <property type="term" value="P:cellular response to oxidative stress"/>
    <property type="evidence" value="ECO:0007669"/>
    <property type="project" value="TreeGrafter"/>
</dbReference>
<dbReference type="FunFam" id="1.10.3880.10:FF:000001">
    <property type="entry name" value="Probable Fe(2+)-trafficking protein"/>
    <property type="match status" value="1"/>
</dbReference>
<dbReference type="Gene3D" id="1.10.3880.10">
    <property type="entry name" value="Fe(II) trafficking protein YggX"/>
    <property type="match status" value="1"/>
</dbReference>
<dbReference type="HAMAP" id="MF_00686">
    <property type="entry name" value="Fe_traffic_YggX"/>
    <property type="match status" value="1"/>
</dbReference>
<dbReference type="InterPro" id="IPR007457">
    <property type="entry name" value="Fe_traffick_prot_YggX"/>
</dbReference>
<dbReference type="InterPro" id="IPR036766">
    <property type="entry name" value="Fe_traffick_prot_YggX_sf"/>
</dbReference>
<dbReference type="NCBIfam" id="NF003817">
    <property type="entry name" value="PRK05408.1"/>
    <property type="match status" value="1"/>
</dbReference>
<dbReference type="PANTHER" id="PTHR36965">
    <property type="entry name" value="FE(2+)-TRAFFICKING PROTEIN-RELATED"/>
    <property type="match status" value="1"/>
</dbReference>
<dbReference type="PANTHER" id="PTHR36965:SF1">
    <property type="entry name" value="FE(2+)-TRAFFICKING PROTEIN-RELATED"/>
    <property type="match status" value="1"/>
</dbReference>
<dbReference type="Pfam" id="PF04362">
    <property type="entry name" value="Iron_traffic"/>
    <property type="match status" value="1"/>
</dbReference>
<dbReference type="PIRSF" id="PIRSF029827">
    <property type="entry name" value="Fe_traffic_YggX"/>
    <property type="match status" value="1"/>
</dbReference>
<dbReference type="SUPFAM" id="SSF111148">
    <property type="entry name" value="YggX-like"/>
    <property type="match status" value="1"/>
</dbReference>
<comment type="function">
    <text evidence="1">Could be a mediator in iron transactions between iron acquisition and iron-requiring processes, such as synthesis and/or repair of Fe-S clusters in biosynthetic enzymes.</text>
</comment>
<comment type="similarity">
    <text evidence="1">Belongs to the Fe(2+)-trafficking protein family.</text>
</comment>
<name>FETP_SHEHH</name>
<proteinExistence type="inferred from homology"/>
<keyword id="KW-0408">Iron</keyword>
<feature type="chain" id="PRO_1000083085" description="Probable Fe(2+)-trafficking protein">
    <location>
        <begin position="1"/>
        <end position="92"/>
    </location>
</feature>
<gene>
    <name type="ordered locus">Shal_1153</name>
</gene>
<organism>
    <name type="scientific">Shewanella halifaxensis (strain HAW-EB4)</name>
    <dbReference type="NCBI Taxonomy" id="458817"/>
    <lineage>
        <taxon>Bacteria</taxon>
        <taxon>Pseudomonadati</taxon>
        <taxon>Pseudomonadota</taxon>
        <taxon>Gammaproteobacteria</taxon>
        <taxon>Alteromonadales</taxon>
        <taxon>Shewanellaceae</taxon>
        <taxon>Shewanella</taxon>
    </lineage>
</organism>